<sequence length="135" mass="14728">MALERTLSIIKPDAVAKNVIGEIYTRFERAGFKIVEAKMIQLDDELAGGFYAEHKERPFYKDLVAFMTSGPVVVSVLEGEGAVLRHRELMGATNPKEAAAGTLRADYATSIDANAVHGSDSVESATREIAYFFGK</sequence>
<dbReference type="EC" id="2.7.4.6" evidence="1"/>
<dbReference type="EMBL" id="CP000749">
    <property type="protein sequence ID" value="ABR70281.1"/>
    <property type="molecule type" value="Genomic_DNA"/>
</dbReference>
<dbReference type="SMR" id="A6VV02"/>
<dbReference type="STRING" id="400668.Mmwyl1_1352"/>
<dbReference type="KEGG" id="mmw:Mmwyl1_1352"/>
<dbReference type="eggNOG" id="COG0105">
    <property type="taxonomic scope" value="Bacteria"/>
</dbReference>
<dbReference type="HOGENOM" id="CLU_060216_8_1_6"/>
<dbReference type="OrthoDB" id="9801161at2"/>
<dbReference type="GO" id="GO:0005737">
    <property type="term" value="C:cytoplasm"/>
    <property type="evidence" value="ECO:0007669"/>
    <property type="project" value="UniProtKB-SubCell"/>
</dbReference>
<dbReference type="GO" id="GO:0005524">
    <property type="term" value="F:ATP binding"/>
    <property type="evidence" value="ECO:0007669"/>
    <property type="project" value="UniProtKB-UniRule"/>
</dbReference>
<dbReference type="GO" id="GO:0046872">
    <property type="term" value="F:metal ion binding"/>
    <property type="evidence" value="ECO:0007669"/>
    <property type="project" value="UniProtKB-KW"/>
</dbReference>
<dbReference type="GO" id="GO:0004550">
    <property type="term" value="F:nucleoside diphosphate kinase activity"/>
    <property type="evidence" value="ECO:0007669"/>
    <property type="project" value="UniProtKB-UniRule"/>
</dbReference>
<dbReference type="GO" id="GO:0006241">
    <property type="term" value="P:CTP biosynthetic process"/>
    <property type="evidence" value="ECO:0007669"/>
    <property type="project" value="UniProtKB-UniRule"/>
</dbReference>
<dbReference type="GO" id="GO:0006183">
    <property type="term" value="P:GTP biosynthetic process"/>
    <property type="evidence" value="ECO:0007669"/>
    <property type="project" value="UniProtKB-UniRule"/>
</dbReference>
<dbReference type="GO" id="GO:0006228">
    <property type="term" value="P:UTP biosynthetic process"/>
    <property type="evidence" value="ECO:0007669"/>
    <property type="project" value="UniProtKB-UniRule"/>
</dbReference>
<dbReference type="CDD" id="cd04413">
    <property type="entry name" value="NDPk_I"/>
    <property type="match status" value="1"/>
</dbReference>
<dbReference type="FunFam" id="3.30.70.141:FF:000001">
    <property type="entry name" value="Nucleoside diphosphate kinase"/>
    <property type="match status" value="1"/>
</dbReference>
<dbReference type="Gene3D" id="3.30.70.141">
    <property type="entry name" value="Nucleoside diphosphate kinase-like domain"/>
    <property type="match status" value="1"/>
</dbReference>
<dbReference type="HAMAP" id="MF_00451">
    <property type="entry name" value="NDP_kinase"/>
    <property type="match status" value="1"/>
</dbReference>
<dbReference type="InterPro" id="IPR034907">
    <property type="entry name" value="NDK-like_dom"/>
</dbReference>
<dbReference type="InterPro" id="IPR036850">
    <property type="entry name" value="NDK-like_dom_sf"/>
</dbReference>
<dbReference type="InterPro" id="IPR001564">
    <property type="entry name" value="Nucleoside_diP_kinase"/>
</dbReference>
<dbReference type="InterPro" id="IPR023005">
    <property type="entry name" value="Nucleoside_diP_kinase_AS"/>
</dbReference>
<dbReference type="NCBIfam" id="NF001908">
    <property type="entry name" value="PRK00668.1"/>
    <property type="match status" value="1"/>
</dbReference>
<dbReference type="PANTHER" id="PTHR46161">
    <property type="entry name" value="NUCLEOSIDE DIPHOSPHATE KINASE"/>
    <property type="match status" value="1"/>
</dbReference>
<dbReference type="PANTHER" id="PTHR46161:SF3">
    <property type="entry name" value="NUCLEOSIDE DIPHOSPHATE KINASE DDB_G0292928-RELATED"/>
    <property type="match status" value="1"/>
</dbReference>
<dbReference type="Pfam" id="PF00334">
    <property type="entry name" value="NDK"/>
    <property type="match status" value="1"/>
</dbReference>
<dbReference type="PRINTS" id="PR01243">
    <property type="entry name" value="NUCDPKINASE"/>
</dbReference>
<dbReference type="SMART" id="SM00562">
    <property type="entry name" value="NDK"/>
    <property type="match status" value="1"/>
</dbReference>
<dbReference type="SUPFAM" id="SSF54919">
    <property type="entry name" value="Nucleoside diphosphate kinase, NDK"/>
    <property type="match status" value="1"/>
</dbReference>
<dbReference type="PROSITE" id="PS00469">
    <property type="entry name" value="NDPK"/>
    <property type="match status" value="1"/>
</dbReference>
<dbReference type="PROSITE" id="PS51374">
    <property type="entry name" value="NDPK_LIKE"/>
    <property type="match status" value="1"/>
</dbReference>
<gene>
    <name evidence="1" type="primary">ndk</name>
    <name type="ordered locus">Mmwyl1_1352</name>
</gene>
<name>NDK_MARMS</name>
<feature type="chain" id="PRO_1000080967" description="Nucleoside diphosphate kinase">
    <location>
        <begin position="1"/>
        <end position="135"/>
    </location>
</feature>
<feature type="active site" description="Pros-phosphohistidine intermediate" evidence="1">
    <location>
        <position position="117"/>
    </location>
</feature>
<feature type="binding site" evidence="1">
    <location>
        <position position="11"/>
    </location>
    <ligand>
        <name>ATP</name>
        <dbReference type="ChEBI" id="CHEBI:30616"/>
    </ligand>
</feature>
<feature type="binding site" evidence="1">
    <location>
        <position position="59"/>
    </location>
    <ligand>
        <name>ATP</name>
        <dbReference type="ChEBI" id="CHEBI:30616"/>
    </ligand>
</feature>
<feature type="binding site" evidence="1">
    <location>
        <position position="87"/>
    </location>
    <ligand>
        <name>ATP</name>
        <dbReference type="ChEBI" id="CHEBI:30616"/>
    </ligand>
</feature>
<feature type="binding site" evidence="1">
    <location>
        <position position="93"/>
    </location>
    <ligand>
        <name>ATP</name>
        <dbReference type="ChEBI" id="CHEBI:30616"/>
    </ligand>
</feature>
<feature type="binding site" evidence="1">
    <location>
        <position position="104"/>
    </location>
    <ligand>
        <name>ATP</name>
        <dbReference type="ChEBI" id="CHEBI:30616"/>
    </ligand>
</feature>
<feature type="binding site" evidence="1">
    <location>
        <position position="114"/>
    </location>
    <ligand>
        <name>ATP</name>
        <dbReference type="ChEBI" id="CHEBI:30616"/>
    </ligand>
</feature>
<organism>
    <name type="scientific">Marinomonas sp. (strain MWYL1)</name>
    <dbReference type="NCBI Taxonomy" id="400668"/>
    <lineage>
        <taxon>Bacteria</taxon>
        <taxon>Pseudomonadati</taxon>
        <taxon>Pseudomonadota</taxon>
        <taxon>Gammaproteobacteria</taxon>
        <taxon>Oceanospirillales</taxon>
        <taxon>Oceanospirillaceae</taxon>
        <taxon>Marinomonas</taxon>
    </lineage>
</organism>
<reference key="1">
    <citation type="submission" date="2007-06" db="EMBL/GenBank/DDBJ databases">
        <title>Complete sequence of Marinomonas sp. MWYL1.</title>
        <authorList>
            <consortium name="US DOE Joint Genome Institute"/>
            <person name="Copeland A."/>
            <person name="Lucas S."/>
            <person name="Lapidus A."/>
            <person name="Barry K."/>
            <person name="Glavina del Rio T."/>
            <person name="Dalin E."/>
            <person name="Tice H."/>
            <person name="Pitluck S."/>
            <person name="Kiss H."/>
            <person name="Brettin T."/>
            <person name="Bruce D."/>
            <person name="Detter J.C."/>
            <person name="Han C."/>
            <person name="Schmutz J."/>
            <person name="Larimer F."/>
            <person name="Land M."/>
            <person name="Hauser L."/>
            <person name="Kyrpides N."/>
            <person name="Kim E."/>
            <person name="Johnston A.W.B."/>
            <person name="Todd J.D."/>
            <person name="Rogers R."/>
            <person name="Wexler M."/>
            <person name="Bond P.L."/>
            <person name="Li Y."/>
            <person name="Richardson P."/>
        </authorList>
    </citation>
    <scope>NUCLEOTIDE SEQUENCE [LARGE SCALE GENOMIC DNA]</scope>
    <source>
        <strain>MWYL1</strain>
    </source>
</reference>
<keyword id="KW-0067">ATP-binding</keyword>
<keyword id="KW-0963">Cytoplasm</keyword>
<keyword id="KW-0418">Kinase</keyword>
<keyword id="KW-0460">Magnesium</keyword>
<keyword id="KW-0479">Metal-binding</keyword>
<keyword id="KW-0546">Nucleotide metabolism</keyword>
<keyword id="KW-0547">Nucleotide-binding</keyword>
<keyword id="KW-0597">Phosphoprotein</keyword>
<keyword id="KW-0808">Transferase</keyword>
<accession>A6VV02</accession>
<protein>
    <recommendedName>
        <fullName evidence="1">Nucleoside diphosphate kinase</fullName>
        <shortName evidence="1">NDK</shortName>
        <shortName evidence="1">NDP kinase</shortName>
        <ecNumber evidence="1">2.7.4.6</ecNumber>
    </recommendedName>
    <alternativeName>
        <fullName evidence="1">Nucleoside-2-P kinase</fullName>
    </alternativeName>
</protein>
<proteinExistence type="inferred from homology"/>
<evidence type="ECO:0000255" key="1">
    <source>
        <dbReference type="HAMAP-Rule" id="MF_00451"/>
    </source>
</evidence>
<comment type="function">
    <text evidence="1">Major role in the synthesis of nucleoside triphosphates other than ATP. The ATP gamma phosphate is transferred to the NDP beta phosphate via a ping-pong mechanism, using a phosphorylated active-site intermediate.</text>
</comment>
<comment type="catalytic activity">
    <reaction evidence="1">
        <text>a 2'-deoxyribonucleoside 5'-diphosphate + ATP = a 2'-deoxyribonucleoside 5'-triphosphate + ADP</text>
        <dbReference type="Rhea" id="RHEA:44640"/>
        <dbReference type="ChEBI" id="CHEBI:30616"/>
        <dbReference type="ChEBI" id="CHEBI:61560"/>
        <dbReference type="ChEBI" id="CHEBI:73316"/>
        <dbReference type="ChEBI" id="CHEBI:456216"/>
        <dbReference type="EC" id="2.7.4.6"/>
    </reaction>
</comment>
<comment type="catalytic activity">
    <reaction evidence="1">
        <text>a ribonucleoside 5'-diphosphate + ATP = a ribonucleoside 5'-triphosphate + ADP</text>
        <dbReference type="Rhea" id="RHEA:18113"/>
        <dbReference type="ChEBI" id="CHEBI:30616"/>
        <dbReference type="ChEBI" id="CHEBI:57930"/>
        <dbReference type="ChEBI" id="CHEBI:61557"/>
        <dbReference type="ChEBI" id="CHEBI:456216"/>
        <dbReference type="EC" id="2.7.4.6"/>
    </reaction>
</comment>
<comment type="cofactor">
    <cofactor evidence="1">
        <name>Mg(2+)</name>
        <dbReference type="ChEBI" id="CHEBI:18420"/>
    </cofactor>
</comment>
<comment type="subunit">
    <text evidence="1">Homotetramer.</text>
</comment>
<comment type="subcellular location">
    <subcellularLocation>
        <location evidence="1">Cytoplasm</location>
    </subcellularLocation>
</comment>
<comment type="similarity">
    <text evidence="1">Belongs to the NDK family.</text>
</comment>